<organism>
    <name type="scientific">Lampetra fluviatilis</name>
    <name type="common">European river lamprey</name>
    <name type="synonym">Petromyzon fluviatilis</name>
    <dbReference type="NCBI Taxonomy" id="7748"/>
    <lineage>
        <taxon>Eukaryota</taxon>
        <taxon>Metazoa</taxon>
        <taxon>Chordata</taxon>
        <taxon>Craniata</taxon>
        <taxon>Vertebrata</taxon>
        <taxon>Cyclostomata</taxon>
        <taxon>Hyperoartia</taxon>
        <taxon>Petromyzontiformes</taxon>
        <taxon>Petromyzontidae</taxon>
        <taxon>Lampetra</taxon>
    </lineage>
</organism>
<dbReference type="EC" id="7.1.1.2"/>
<dbReference type="EMBL" id="Y09528">
    <property type="protein sequence ID" value="CAA70719.1"/>
    <property type="molecule type" value="Genomic_DNA"/>
</dbReference>
<dbReference type="PIR" id="T13811">
    <property type="entry name" value="T13811"/>
</dbReference>
<dbReference type="RefSeq" id="NP_033638.1">
    <property type="nucleotide sequence ID" value="NC_001131.1"/>
</dbReference>
<dbReference type="SMR" id="O21069"/>
<dbReference type="GeneID" id="808818"/>
<dbReference type="CTD" id="4535"/>
<dbReference type="GO" id="GO:0005743">
    <property type="term" value="C:mitochondrial inner membrane"/>
    <property type="evidence" value="ECO:0007669"/>
    <property type="project" value="UniProtKB-SubCell"/>
</dbReference>
<dbReference type="GO" id="GO:0008137">
    <property type="term" value="F:NADH dehydrogenase (ubiquinone) activity"/>
    <property type="evidence" value="ECO:0007669"/>
    <property type="project" value="UniProtKB-EC"/>
</dbReference>
<dbReference type="GO" id="GO:0009060">
    <property type="term" value="P:aerobic respiration"/>
    <property type="evidence" value="ECO:0007669"/>
    <property type="project" value="TreeGrafter"/>
</dbReference>
<dbReference type="HAMAP" id="MF_01350">
    <property type="entry name" value="NDH1_NuoH"/>
    <property type="match status" value="1"/>
</dbReference>
<dbReference type="InterPro" id="IPR001694">
    <property type="entry name" value="NADH_UbQ_OxRdtase_su1/FPO"/>
</dbReference>
<dbReference type="InterPro" id="IPR018086">
    <property type="entry name" value="NADH_UbQ_OxRdtase_su1_CS"/>
</dbReference>
<dbReference type="PANTHER" id="PTHR11432">
    <property type="entry name" value="NADH DEHYDROGENASE SUBUNIT 1"/>
    <property type="match status" value="1"/>
</dbReference>
<dbReference type="PANTHER" id="PTHR11432:SF3">
    <property type="entry name" value="NADH-UBIQUINONE OXIDOREDUCTASE CHAIN 1"/>
    <property type="match status" value="1"/>
</dbReference>
<dbReference type="Pfam" id="PF00146">
    <property type="entry name" value="NADHdh"/>
    <property type="match status" value="1"/>
</dbReference>
<dbReference type="PROSITE" id="PS00667">
    <property type="entry name" value="COMPLEX1_ND1_1"/>
    <property type="match status" value="1"/>
</dbReference>
<dbReference type="PROSITE" id="PS00668">
    <property type="entry name" value="COMPLEX1_ND1_2"/>
    <property type="match status" value="1"/>
</dbReference>
<gene>
    <name type="primary">MT-ND1</name>
    <name type="synonym">MTND1</name>
    <name type="synonym">NADH1</name>
    <name type="synonym">ND1</name>
</gene>
<sequence length="321" mass="35313">MLVMLTSTLILVLMVLLAVAFLTMVERKTLGYMQLRKGPNVVGFMGLLQPIADGVKLFLKEPVWPTAASPALFIAAPIMALTLALSLWMFIPMPQSISTINLTLLVILAISSLSVYASLGSGWASNSKYALIGALRAVAQTISYEVSLGLILLCLIILTGGFSLQAFIYTQEHTWFLLSSWPLAAMWFVSTLAETNRTPFDLTEGESELVSGFNVEYAGGPFALFFLAEYSNILFMNTLTAIMFLGPLGPNNLNILPIINVMMKATPLIILFLWIRASYPRFRYDQLMHLMWKNFLPLNLALFTLQLSLAVSLGGAGVPQM</sequence>
<keyword id="KW-0249">Electron transport</keyword>
<keyword id="KW-0472">Membrane</keyword>
<keyword id="KW-0496">Mitochondrion</keyword>
<keyword id="KW-0999">Mitochondrion inner membrane</keyword>
<keyword id="KW-0520">NAD</keyword>
<keyword id="KW-0679">Respiratory chain</keyword>
<keyword id="KW-1278">Translocase</keyword>
<keyword id="KW-0812">Transmembrane</keyword>
<keyword id="KW-1133">Transmembrane helix</keyword>
<keyword id="KW-0813">Transport</keyword>
<keyword id="KW-0830">Ubiquinone</keyword>
<accession>O21069</accession>
<comment type="function">
    <text evidence="1">Core subunit of the mitochondrial membrane respiratory chain NADH dehydrogenase (Complex I) that is believed to belong to the minimal assembly required for catalysis. Complex I functions in the transfer of electrons from NADH to the respiratory chain. The immediate electron acceptor for the enzyme is believed to be ubiquinone (By similarity).</text>
</comment>
<comment type="catalytic activity">
    <reaction>
        <text>a ubiquinone + NADH + 5 H(+)(in) = a ubiquinol + NAD(+) + 4 H(+)(out)</text>
        <dbReference type="Rhea" id="RHEA:29091"/>
        <dbReference type="Rhea" id="RHEA-COMP:9565"/>
        <dbReference type="Rhea" id="RHEA-COMP:9566"/>
        <dbReference type="ChEBI" id="CHEBI:15378"/>
        <dbReference type="ChEBI" id="CHEBI:16389"/>
        <dbReference type="ChEBI" id="CHEBI:17976"/>
        <dbReference type="ChEBI" id="CHEBI:57540"/>
        <dbReference type="ChEBI" id="CHEBI:57945"/>
        <dbReference type="EC" id="7.1.1.2"/>
    </reaction>
</comment>
<comment type="subcellular location">
    <subcellularLocation>
        <location evidence="1">Mitochondrion inner membrane</location>
        <topology evidence="1">Multi-pass membrane protein</topology>
    </subcellularLocation>
</comment>
<comment type="similarity">
    <text evidence="3">Belongs to the complex I subunit 1 family.</text>
</comment>
<feature type="chain" id="PRO_0000117416" description="NADH-ubiquinone oxidoreductase chain 1">
    <location>
        <begin position="1"/>
        <end position="321"/>
    </location>
</feature>
<feature type="transmembrane region" description="Helical" evidence="2">
    <location>
        <begin position="2"/>
        <end position="22"/>
    </location>
</feature>
<feature type="transmembrane region" description="Helical" evidence="2">
    <location>
        <begin position="71"/>
        <end position="91"/>
    </location>
</feature>
<feature type="transmembrane region" description="Helical" evidence="2">
    <location>
        <begin position="104"/>
        <end position="124"/>
    </location>
</feature>
<feature type="transmembrane region" description="Helical" evidence="2">
    <location>
        <begin position="148"/>
        <end position="168"/>
    </location>
</feature>
<feature type="transmembrane region" description="Helical" evidence="2">
    <location>
        <begin position="173"/>
        <end position="193"/>
    </location>
</feature>
<feature type="transmembrane region" description="Helical" evidence="2">
    <location>
        <begin position="224"/>
        <end position="244"/>
    </location>
</feature>
<feature type="transmembrane region" description="Helical" evidence="2">
    <location>
        <begin position="255"/>
        <end position="275"/>
    </location>
</feature>
<feature type="transmembrane region" description="Helical" evidence="2">
    <location>
        <begin position="295"/>
        <end position="315"/>
    </location>
</feature>
<evidence type="ECO:0000250" key="1"/>
<evidence type="ECO:0000255" key="2"/>
<evidence type="ECO:0000305" key="3"/>
<name>NU1M_LAMFL</name>
<geneLocation type="mitochondrion"/>
<reference key="1">
    <citation type="journal article" date="1997" name="Mol. Biol. Evol.">
        <title>The main features of the craniate mitochondrial DNA between the ND1 and the COI genes were established in the common ancestor with the lancelet.</title>
        <authorList>
            <person name="Delarbre C."/>
            <person name="Barriel V."/>
            <person name="Tillier S."/>
            <person name="Janvier P."/>
            <person name="Gachelin G."/>
        </authorList>
    </citation>
    <scope>NUCLEOTIDE SEQUENCE [GENOMIC DNA]</scope>
</reference>
<protein>
    <recommendedName>
        <fullName>NADH-ubiquinone oxidoreductase chain 1</fullName>
        <ecNumber>7.1.1.2</ecNumber>
    </recommendedName>
    <alternativeName>
        <fullName>NADH dehydrogenase subunit 1</fullName>
    </alternativeName>
</protein>
<proteinExistence type="inferred from homology"/>